<protein>
    <recommendedName>
        <fullName evidence="1">DNA-directed RNA polymerase subunit beta'</fullName>
        <shortName evidence="1">RNAP subunit beta'</shortName>
        <ecNumber evidence="1">2.7.7.6</ecNumber>
    </recommendedName>
    <alternativeName>
        <fullName evidence="1">RNA polymerase subunit beta'</fullName>
    </alternativeName>
    <alternativeName>
        <fullName evidence="1">Transcriptase subunit beta'</fullName>
    </alternativeName>
</protein>
<evidence type="ECO:0000255" key="1">
    <source>
        <dbReference type="HAMAP-Rule" id="MF_01322"/>
    </source>
</evidence>
<reference key="1">
    <citation type="journal article" date="2001" name="J. Bacteriol.">
        <title>Genome sequence and comparative analysis of the solvent-producing bacterium Clostridium acetobutylicum.</title>
        <authorList>
            <person name="Noelling J."/>
            <person name="Breton G."/>
            <person name="Omelchenko M.V."/>
            <person name="Makarova K.S."/>
            <person name="Zeng Q."/>
            <person name="Gibson R."/>
            <person name="Lee H.M."/>
            <person name="Dubois J."/>
            <person name="Qiu D."/>
            <person name="Hitti J."/>
            <person name="Wolf Y.I."/>
            <person name="Tatusov R.L."/>
            <person name="Sabathe F."/>
            <person name="Doucette-Stamm L.A."/>
            <person name="Soucaille P."/>
            <person name="Daly M.J."/>
            <person name="Bennett G.N."/>
            <person name="Koonin E.V."/>
            <person name="Smith D.R."/>
        </authorList>
    </citation>
    <scope>NUCLEOTIDE SEQUENCE [LARGE SCALE GENOMIC DNA]</scope>
    <source>
        <strain>ATCC 824 / DSM 792 / JCM 1419 / IAM 19013 / LMG 5710 / NBRC 13948 / NRRL B-527 / VKM B-1787 / 2291 / W</strain>
    </source>
</reference>
<name>RPOC_CLOAB</name>
<feature type="chain" id="PRO_0000067732" description="DNA-directed RNA polymerase subunit beta'">
    <location>
        <begin position="1"/>
        <end position="1182"/>
    </location>
</feature>
<feature type="binding site" evidence="1">
    <location>
        <position position="59"/>
    </location>
    <ligand>
        <name>Zn(2+)</name>
        <dbReference type="ChEBI" id="CHEBI:29105"/>
        <label>1</label>
    </ligand>
</feature>
<feature type="binding site" evidence="1">
    <location>
        <position position="61"/>
    </location>
    <ligand>
        <name>Zn(2+)</name>
        <dbReference type="ChEBI" id="CHEBI:29105"/>
        <label>1</label>
    </ligand>
</feature>
<feature type="binding site" evidence="1">
    <location>
        <position position="74"/>
    </location>
    <ligand>
        <name>Zn(2+)</name>
        <dbReference type="ChEBI" id="CHEBI:29105"/>
        <label>1</label>
    </ligand>
</feature>
<feature type="binding site" evidence="1">
    <location>
        <position position="77"/>
    </location>
    <ligand>
        <name>Zn(2+)</name>
        <dbReference type="ChEBI" id="CHEBI:29105"/>
        <label>1</label>
    </ligand>
</feature>
<feature type="binding site" evidence="1">
    <location>
        <position position="449"/>
    </location>
    <ligand>
        <name>Mg(2+)</name>
        <dbReference type="ChEBI" id="CHEBI:18420"/>
    </ligand>
</feature>
<feature type="binding site" evidence="1">
    <location>
        <position position="451"/>
    </location>
    <ligand>
        <name>Mg(2+)</name>
        <dbReference type="ChEBI" id="CHEBI:18420"/>
    </ligand>
</feature>
<feature type="binding site" evidence="1">
    <location>
        <position position="453"/>
    </location>
    <ligand>
        <name>Mg(2+)</name>
        <dbReference type="ChEBI" id="CHEBI:18420"/>
    </ligand>
</feature>
<feature type="binding site" evidence="1">
    <location>
        <position position="794"/>
    </location>
    <ligand>
        <name>Zn(2+)</name>
        <dbReference type="ChEBI" id="CHEBI:29105"/>
        <label>2</label>
    </ligand>
</feature>
<feature type="binding site" evidence="1">
    <location>
        <position position="868"/>
    </location>
    <ligand>
        <name>Zn(2+)</name>
        <dbReference type="ChEBI" id="CHEBI:29105"/>
        <label>2</label>
    </ligand>
</feature>
<feature type="binding site" evidence="1">
    <location>
        <position position="875"/>
    </location>
    <ligand>
        <name>Zn(2+)</name>
        <dbReference type="ChEBI" id="CHEBI:29105"/>
        <label>2</label>
    </ligand>
</feature>
<feature type="binding site" evidence="1">
    <location>
        <position position="878"/>
    </location>
    <ligand>
        <name>Zn(2+)</name>
        <dbReference type="ChEBI" id="CHEBI:29105"/>
        <label>2</label>
    </ligand>
</feature>
<sequence>MELNKFDALQIGLASPEKIREWSRGEVKKPETINYRTLKPEKDGLFCERIFGPIKDWECHCGKYKRVRYKGIVCDRCGVEVTKSKVRRERMGHIELAAPVSHIWYFKGIPSRMGLILDMSPRALEKVLYFASYLVLDPKETPLLKKQLLNEKEYREAADKYGEESFEAGMGAESIKKLLQEIDLNQLSEELKENLKTSTGQKKVRIIRRLEVVESFRKSTNKPEWMIMDVIPVIPPDLRPMVQLDGGRFATSDLNDLYRRVINRNNRLKKLLDLGAPDIIVRNEKRMLQEAVDALIDNGRRGRPVTGPGNRPLKSLSDMLKGKQGRFRQNLLGKRVDYSGRSVIVVGPDLKMYQCGLPKEMALELFKPFVMKKLVETGAAHNIKSAKRMVERVQNQVWDVLEEVISDHPVMLNRAPTLHRLGIQAFQPILVEGRAIKLHPLACTAYNADFDGDQMAVHVPLSVEAQAESRFLMLAAHNILKPSDGKPVCVPTQDMVLGSYYLTIDKDGVKGEGKAFTNVDEALMAYQLGEIDIHAKIKVRLEKEIDGKMVSGIIETTIGKLIFNESIPQDLGFIDRSIAGNELLLEINFLVGKKNLGGIIDKCYRKHGPTKTSIMLDKIKAKGYHYSTISAITVSTSDMTVPPNKGELMSEAETAVEKIEKMYRRGFISDDERYERVISTWTKTTEKVADALMDNLDRFNPIFMMADSGARGSKSQIKQLAGMRGLMANPSGKIIELPIKASFREGLDVLEYFISTHGARKGNADTALKTADSGYLTRRLVDVSQDVIVRNEDCGATEGFEVSEIKEGNEVIESLSERLIGRYTSEDIIDPTSKEVLVKQNEYIDEDKAIRIEKVGVKKVKIRSVFTCNCKYGVCAKCYGMDMATAEKISMGEAVGIVAAQSIGEPGTQLTMRTFHTGGVAGSDITQGLPRVEELFEARKPKGLAIVSEVSGTVRIEETKKKRIVFIATESGEEVSYDIPFGSSLKVKNGETIGAGDEITEGSVNPHDIIRIKGVNAVKNYLLSEVQKVYRLQGVDINDKHLEVVIRQMTRKVKVEDSGDTELLPGTMIDIFDFRDENKKVEENGGRPAQARVSLLGITKAALATDSFLSAASFQETTRVLTDAAIKGKSDPLVGLKENVTIGKLIPAGTGMNRYKNIEIDPLVTETNADDENFIAEDKIEG</sequence>
<accession>Q97EH0</accession>
<comment type="function">
    <text evidence="1">DNA-dependent RNA polymerase catalyzes the transcription of DNA into RNA using the four ribonucleoside triphosphates as substrates.</text>
</comment>
<comment type="catalytic activity">
    <reaction evidence="1">
        <text>RNA(n) + a ribonucleoside 5'-triphosphate = RNA(n+1) + diphosphate</text>
        <dbReference type="Rhea" id="RHEA:21248"/>
        <dbReference type="Rhea" id="RHEA-COMP:14527"/>
        <dbReference type="Rhea" id="RHEA-COMP:17342"/>
        <dbReference type="ChEBI" id="CHEBI:33019"/>
        <dbReference type="ChEBI" id="CHEBI:61557"/>
        <dbReference type="ChEBI" id="CHEBI:140395"/>
        <dbReference type="EC" id="2.7.7.6"/>
    </reaction>
</comment>
<comment type="cofactor">
    <cofactor evidence="1">
        <name>Mg(2+)</name>
        <dbReference type="ChEBI" id="CHEBI:18420"/>
    </cofactor>
    <text evidence="1">Binds 1 Mg(2+) ion per subunit.</text>
</comment>
<comment type="cofactor">
    <cofactor evidence="1">
        <name>Zn(2+)</name>
        <dbReference type="ChEBI" id="CHEBI:29105"/>
    </cofactor>
    <text evidence="1">Binds 2 Zn(2+) ions per subunit.</text>
</comment>
<comment type="subunit">
    <text evidence="1">The RNAP catalytic core consists of 2 alpha, 1 beta, 1 beta' and 1 omega subunit. When a sigma factor is associated with the core the holoenzyme is formed, which can initiate transcription.</text>
</comment>
<comment type="similarity">
    <text evidence="1">Belongs to the RNA polymerase beta' chain family.</text>
</comment>
<keyword id="KW-0240">DNA-directed RNA polymerase</keyword>
<keyword id="KW-0460">Magnesium</keyword>
<keyword id="KW-0479">Metal-binding</keyword>
<keyword id="KW-0548">Nucleotidyltransferase</keyword>
<keyword id="KW-1185">Reference proteome</keyword>
<keyword id="KW-0804">Transcription</keyword>
<keyword id="KW-0808">Transferase</keyword>
<keyword id="KW-0862">Zinc</keyword>
<organism>
    <name type="scientific">Clostridium acetobutylicum (strain ATCC 824 / DSM 792 / JCM 1419 / IAM 19013 / LMG 5710 / NBRC 13948 / NRRL B-527 / VKM B-1787 / 2291 / W)</name>
    <dbReference type="NCBI Taxonomy" id="272562"/>
    <lineage>
        <taxon>Bacteria</taxon>
        <taxon>Bacillati</taxon>
        <taxon>Bacillota</taxon>
        <taxon>Clostridia</taxon>
        <taxon>Eubacteriales</taxon>
        <taxon>Clostridiaceae</taxon>
        <taxon>Clostridium</taxon>
    </lineage>
</organism>
<proteinExistence type="inferred from homology"/>
<gene>
    <name evidence="1" type="primary">rpoC</name>
    <name type="ordered locus">CA_C3142</name>
</gene>
<dbReference type="EC" id="2.7.7.6" evidence="1"/>
<dbReference type="EMBL" id="AE001437">
    <property type="protein sequence ID" value="AAK81080.1"/>
    <property type="molecule type" value="Genomic_DNA"/>
</dbReference>
<dbReference type="PIR" id="E97286">
    <property type="entry name" value="E97286"/>
</dbReference>
<dbReference type="RefSeq" id="NP_349740.1">
    <property type="nucleotide sequence ID" value="NC_003030.1"/>
</dbReference>
<dbReference type="RefSeq" id="WP_010966420.1">
    <property type="nucleotide sequence ID" value="NC_003030.1"/>
</dbReference>
<dbReference type="SMR" id="Q97EH0"/>
<dbReference type="STRING" id="272562.CA_C3142"/>
<dbReference type="GeneID" id="44999628"/>
<dbReference type="KEGG" id="cac:CA_C3142"/>
<dbReference type="PATRIC" id="fig|272562.8.peg.3323"/>
<dbReference type="eggNOG" id="COG0086">
    <property type="taxonomic scope" value="Bacteria"/>
</dbReference>
<dbReference type="HOGENOM" id="CLU_000524_3_1_9"/>
<dbReference type="OrthoDB" id="9815296at2"/>
<dbReference type="Proteomes" id="UP000000814">
    <property type="component" value="Chromosome"/>
</dbReference>
<dbReference type="GO" id="GO:0000428">
    <property type="term" value="C:DNA-directed RNA polymerase complex"/>
    <property type="evidence" value="ECO:0007669"/>
    <property type="project" value="UniProtKB-KW"/>
</dbReference>
<dbReference type="GO" id="GO:0003677">
    <property type="term" value="F:DNA binding"/>
    <property type="evidence" value="ECO:0007669"/>
    <property type="project" value="UniProtKB-UniRule"/>
</dbReference>
<dbReference type="GO" id="GO:0003899">
    <property type="term" value="F:DNA-directed RNA polymerase activity"/>
    <property type="evidence" value="ECO:0007669"/>
    <property type="project" value="UniProtKB-UniRule"/>
</dbReference>
<dbReference type="GO" id="GO:0000287">
    <property type="term" value="F:magnesium ion binding"/>
    <property type="evidence" value="ECO:0007669"/>
    <property type="project" value="UniProtKB-UniRule"/>
</dbReference>
<dbReference type="GO" id="GO:0008270">
    <property type="term" value="F:zinc ion binding"/>
    <property type="evidence" value="ECO:0007669"/>
    <property type="project" value="UniProtKB-UniRule"/>
</dbReference>
<dbReference type="GO" id="GO:0006351">
    <property type="term" value="P:DNA-templated transcription"/>
    <property type="evidence" value="ECO:0007669"/>
    <property type="project" value="UniProtKB-UniRule"/>
</dbReference>
<dbReference type="CDD" id="cd02655">
    <property type="entry name" value="RNAP_beta'_C"/>
    <property type="match status" value="1"/>
</dbReference>
<dbReference type="CDD" id="cd01609">
    <property type="entry name" value="RNAP_beta'_N"/>
    <property type="match status" value="1"/>
</dbReference>
<dbReference type="FunFam" id="1.10.150.390:FF:000002">
    <property type="entry name" value="DNA-directed RNA polymerase subunit beta"/>
    <property type="match status" value="1"/>
</dbReference>
<dbReference type="FunFam" id="1.10.40.90:FF:000001">
    <property type="entry name" value="DNA-directed RNA polymerase subunit beta"/>
    <property type="match status" value="1"/>
</dbReference>
<dbReference type="FunFam" id="4.10.860.120:FF:000001">
    <property type="entry name" value="DNA-directed RNA polymerase subunit beta"/>
    <property type="match status" value="1"/>
</dbReference>
<dbReference type="Gene3D" id="1.10.132.30">
    <property type="match status" value="1"/>
</dbReference>
<dbReference type="Gene3D" id="1.10.150.390">
    <property type="match status" value="1"/>
</dbReference>
<dbReference type="Gene3D" id="1.10.1790.20">
    <property type="match status" value="1"/>
</dbReference>
<dbReference type="Gene3D" id="1.10.40.90">
    <property type="match status" value="1"/>
</dbReference>
<dbReference type="Gene3D" id="2.40.40.20">
    <property type="match status" value="1"/>
</dbReference>
<dbReference type="Gene3D" id="2.40.50.100">
    <property type="match status" value="1"/>
</dbReference>
<dbReference type="Gene3D" id="4.10.860.120">
    <property type="entry name" value="RNA polymerase II, clamp domain"/>
    <property type="match status" value="1"/>
</dbReference>
<dbReference type="Gene3D" id="1.10.274.100">
    <property type="entry name" value="RNA polymerase Rpb1, domain 3"/>
    <property type="match status" value="1"/>
</dbReference>
<dbReference type="HAMAP" id="MF_01322">
    <property type="entry name" value="RNApol_bact_RpoC"/>
    <property type="match status" value="1"/>
</dbReference>
<dbReference type="InterPro" id="IPR045867">
    <property type="entry name" value="DNA-dir_RpoC_beta_prime"/>
</dbReference>
<dbReference type="InterPro" id="IPR012754">
    <property type="entry name" value="DNA-dir_RpoC_beta_prime_bact"/>
</dbReference>
<dbReference type="InterPro" id="IPR000722">
    <property type="entry name" value="RNA_pol_asu"/>
</dbReference>
<dbReference type="InterPro" id="IPR006592">
    <property type="entry name" value="RNA_pol_N"/>
</dbReference>
<dbReference type="InterPro" id="IPR007080">
    <property type="entry name" value="RNA_pol_Rpb1_1"/>
</dbReference>
<dbReference type="InterPro" id="IPR007066">
    <property type="entry name" value="RNA_pol_Rpb1_3"/>
</dbReference>
<dbReference type="InterPro" id="IPR042102">
    <property type="entry name" value="RNA_pol_Rpb1_3_sf"/>
</dbReference>
<dbReference type="InterPro" id="IPR007083">
    <property type="entry name" value="RNA_pol_Rpb1_4"/>
</dbReference>
<dbReference type="InterPro" id="IPR007081">
    <property type="entry name" value="RNA_pol_Rpb1_5"/>
</dbReference>
<dbReference type="InterPro" id="IPR044893">
    <property type="entry name" value="RNA_pol_Rpb1_clamp_domain"/>
</dbReference>
<dbReference type="InterPro" id="IPR038120">
    <property type="entry name" value="Rpb1_funnel_sf"/>
</dbReference>
<dbReference type="NCBIfam" id="NF011498">
    <property type="entry name" value="PRK14906.1"/>
    <property type="match status" value="1"/>
</dbReference>
<dbReference type="NCBIfam" id="TIGR02386">
    <property type="entry name" value="rpoC_TIGR"/>
    <property type="match status" value="1"/>
</dbReference>
<dbReference type="PANTHER" id="PTHR19376">
    <property type="entry name" value="DNA-DIRECTED RNA POLYMERASE"/>
    <property type="match status" value="1"/>
</dbReference>
<dbReference type="PANTHER" id="PTHR19376:SF54">
    <property type="entry name" value="DNA-DIRECTED RNA POLYMERASE SUBUNIT BETA"/>
    <property type="match status" value="1"/>
</dbReference>
<dbReference type="Pfam" id="PF04997">
    <property type="entry name" value="RNA_pol_Rpb1_1"/>
    <property type="match status" value="1"/>
</dbReference>
<dbReference type="Pfam" id="PF00623">
    <property type="entry name" value="RNA_pol_Rpb1_2"/>
    <property type="match status" value="1"/>
</dbReference>
<dbReference type="Pfam" id="PF04983">
    <property type="entry name" value="RNA_pol_Rpb1_3"/>
    <property type="match status" value="1"/>
</dbReference>
<dbReference type="Pfam" id="PF05000">
    <property type="entry name" value="RNA_pol_Rpb1_4"/>
    <property type="match status" value="1"/>
</dbReference>
<dbReference type="Pfam" id="PF04998">
    <property type="entry name" value="RNA_pol_Rpb1_5"/>
    <property type="match status" value="1"/>
</dbReference>
<dbReference type="SMART" id="SM00663">
    <property type="entry name" value="RPOLA_N"/>
    <property type="match status" value="1"/>
</dbReference>
<dbReference type="SUPFAM" id="SSF64484">
    <property type="entry name" value="beta and beta-prime subunits of DNA dependent RNA-polymerase"/>
    <property type="match status" value="1"/>
</dbReference>